<comment type="function">
    <text evidence="1">The RuvA-RuvB-RuvC complex processes Holliday junction (HJ) DNA during genetic recombination and DNA repair, while the RuvA-RuvB complex plays an important role in the rescue of blocked DNA replication forks via replication fork reversal (RFR). RuvA specifically binds to HJ cruciform DNA, conferring on it an open structure. The RuvB hexamer acts as an ATP-dependent pump, pulling dsDNA into and through the RuvAB complex. RuvB forms 2 homohexamers on either side of HJ DNA bound by 1 or 2 RuvA tetramers; 4 subunits per hexamer contact DNA at a time. Coordinated motions by a converter formed by DNA-disengaged RuvB subunits stimulates ATP hydrolysis and nucleotide exchange. Immobilization of the converter enables RuvB to convert the ATP-contained energy into a lever motion, pulling 2 nucleotides of DNA out of the RuvA tetramer per ATP hydrolyzed, thus driving DNA branch migration. The RuvB motors rotate together with the DNA substrate, which together with the progressing nucleotide cycle form the mechanistic basis for DNA recombination by continuous HJ branch migration. Branch migration allows RuvC to scan DNA until it finds its consensus sequence, where it cleaves and resolves cruciform DNA.</text>
</comment>
<comment type="catalytic activity">
    <reaction evidence="1">
        <text>ATP + H2O = ADP + phosphate + H(+)</text>
        <dbReference type="Rhea" id="RHEA:13065"/>
        <dbReference type="ChEBI" id="CHEBI:15377"/>
        <dbReference type="ChEBI" id="CHEBI:15378"/>
        <dbReference type="ChEBI" id="CHEBI:30616"/>
        <dbReference type="ChEBI" id="CHEBI:43474"/>
        <dbReference type="ChEBI" id="CHEBI:456216"/>
    </reaction>
</comment>
<comment type="subunit">
    <text evidence="1">Homohexamer. Forms an RuvA(8)-RuvB(12)-Holliday junction (HJ) complex. HJ DNA is sandwiched between 2 RuvA tetramers; dsDNA enters through RuvA and exits via RuvB. An RuvB hexamer assembles on each DNA strand where it exits the tetramer. Each RuvB hexamer is contacted by two RuvA subunits (via domain III) on 2 adjacent RuvB subunits; this complex drives branch migration. In the full resolvosome a probable DNA-RuvA(4)-RuvB(12)-RuvC(2) complex forms which resolves the HJ.</text>
</comment>
<comment type="subcellular location">
    <subcellularLocation>
        <location evidence="1">Cytoplasm</location>
    </subcellularLocation>
</comment>
<comment type="domain">
    <text evidence="1">Has 3 domains, the large (RuvB-L) and small ATPase (RuvB-S) domains and the C-terminal head (RuvB-H) domain. The head domain binds DNA, while the ATPase domains jointly bind ATP, ADP or are empty depending on the state of the subunit in the translocation cycle. During a single DNA translocation step the structure of each domain remains the same, but their relative positions change.</text>
</comment>
<comment type="similarity">
    <text evidence="1">Belongs to the RuvB family.</text>
</comment>
<gene>
    <name evidence="1" type="primary">ruvB</name>
    <name type="ordered locus">MPN_536</name>
    <name type="ORF">MP306</name>
</gene>
<reference key="1">
    <citation type="journal article" date="1996" name="Nucleic Acids Res.">
        <title>Complete sequence analysis of the genome of the bacterium Mycoplasma pneumoniae.</title>
        <authorList>
            <person name="Himmelreich R."/>
            <person name="Hilbert H."/>
            <person name="Plagens H."/>
            <person name="Pirkl E."/>
            <person name="Li B.-C."/>
            <person name="Herrmann R."/>
        </authorList>
    </citation>
    <scope>NUCLEOTIDE SEQUENCE [LARGE SCALE GENOMIC DNA]</scope>
    <source>
        <strain>ATCC 29342 / M129 / Subtype 1</strain>
    </source>
</reference>
<evidence type="ECO:0000255" key="1">
    <source>
        <dbReference type="HAMAP-Rule" id="MF_00016"/>
    </source>
</evidence>
<keyword id="KW-0067">ATP-binding</keyword>
<keyword id="KW-0963">Cytoplasm</keyword>
<keyword id="KW-0227">DNA damage</keyword>
<keyword id="KW-0233">DNA recombination</keyword>
<keyword id="KW-0234">DNA repair</keyword>
<keyword id="KW-0238">DNA-binding</keyword>
<keyword id="KW-0378">Hydrolase</keyword>
<keyword id="KW-0547">Nucleotide-binding</keyword>
<keyword id="KW-1185">Reference proteome</keyword>
<name>RUVB_MYCPN</name>
<feature type="chain" id="PRO_0000165560" description="Holliday junction branch migration complex subunit RuvB">
    <location>
        <begin position="1"/>
        <end position="307"/>
    </location>
</feature>
<feature type="region of interest" description="Large ATPase domain (RuvB-L)" evidence="1">
    <location>
        <begin position="1"/>
        <end position="167"/>
    </location>
</feature>
<feature type="region of interest" description="Small ATPAse domain (RuvB-S)" evidence="1">
    <location>
        <begin position="168"/>
        <end position="233"/>
    </location>
</feature>
<feature type="region of interest" description="Head domain (RuvB-H)" evidence="1">
    <location>
        <begin position="236"/>
        <end position="307"/>
    </location>
</feature>
<feature type="binding site" evidence="1">
    <location>
        <position position="5"/>
    </location>
    <ligand>
        <name>ATP</name>
        <dbReference type="ChEBI" id="CHEBI:30616"/>
    </ligand>
</feature>
<feature type="binding site" evidence="1">
    <location>
        <position position="48"/>
    </location>
    <ligand>
        <name>ATP</name>
        <dbReference type="ChEBI" id="CHEBI:30616"/>
    </ligand>
</feature>
<feature type="binding site" evidence="1">
    <location>
        <position position="51"/>
    </location>
    <ligand>
        <name>ATP</name>
        <dbReference type="ChEBI" id="CHEBI:30616"/>
    </ligand>
</feature>
<feature type="binding site" evidence="1">
    <location>
        <position position="52"/>
    </location>
    <ligand>
        <name>ATP</name>
        <dbReference type="ChEBI" id="CHEBI:30616"/>
    </ligand>
</feature>
<feature type="binding site" evidence="1">
    <location>
        <position position="52"/>
    </location>
    <ligand>
        <name>Mg(2+)</name>
        <dbReference type="ChEBI" id="CHEBI:18420"/>
    </ligand>
</feature>
<feature type="binding site" evidence="1">
    <location>
        <position position="53"/>
    </location>
    <ligand>
        <name>ATP</name>
        <dbReference type="ChEBI" id="CHEBI:30616"/>
    </ligand>
</feature>
<feature type="binding site" evidence="1">
    <location>
        <begin position="114"/>
        <end position="116"/>
    </location>
    <ligand>
        <name>ATP</name>
        <dbReference type="ChEBI" id="CHEBI:30616"/>
    </ligand>
</feature>
<feature type="binding site" evidence="1">
    <location>
        <position position="157"/>
    </location>
    <ligand>
        <name>ATP</name>
        <dbReference type="ChEBI" id="CHEBI:30616"/>
    </ligand>
</feature>
<feature type="binding site" evidence="1">
    <location>
        <position position="167"/>
    </location>
    <ligand>
        <name>ATP</name>
        <dbReference type="ChEBI" id="CHEBI:30616"/>
    </ligand>
</feature>
<feature type="binding site" evidence="1">
    <location>
        <position position="204"/>
    </location>
    <ligand>
        <name>ATP</name>
        <dbReference type="ChEBI" id="CHEBI:30616"/>
    </ligand>
</feature>
<feature type="binding site" evidence="1">
    <location>
        <position position="289"/>
    </location>
    <ligand>
        <name>DNA</name>
        <dbReference type="ChEBI" id="CHEBI:16991"/>
    </ligand>
</feature>
<feature type="binding site" evidence="1">
    <location>
        <position position="294"/>
    </location>
    <ligand>
        <name>DNA</name>
        <dbReference type="ChEBI" id="CHEBI:16991"/>
    </ligand>
</feature>
<proteinExistence type="inferred from homology"/>
<dbReference type="EC" id="3.6.4.-" evidence="1"/>
<dbReference type="EMBL" id="U00089">
    <property type="protein sequence ID" value="AAB95954.1"/>
    <property type="molecule type" value="Genomic_DNA"/>
</dbReference>
<dbReference type="PIR" id="S73632">
    <property type="entry name" value="S73632"/>
</dbReference>
<dbReference type="RefSeq" id="NP_110225.1">
    <property type="nucleotide sequence ID" value="NC_000912.1"/>
</dbReference>
<dbReference type="RefSeq" id="WP_010874893.1">
    <property type="nucleotide sequence ID" value="NZ_OU342337.1"/>
</dbReference>
<dbReference type="SMR" id="P75242"/>
<dbReference type="IntAct" id="P75242">
    <property type="interactions" value="2"/>
</dbReference>
<dbReference type="STRING" id="272634.MPN_536"/>
<dbReference type="EnsemblBacteria" id="AAB95954">
    <property type="protein sequence ID" value="AAB95954"/>
    <property type="gene ID" value="MPN_536"/>
</dbReference>
<dbReference type="KEGG" id="mpn:MPN_536"/>
<dbReference type="PATRIC" id="fig|272634.6.peg.598"/>
<dbReference type="HOGENOM" id="CLU_055599_1_0_14"/>
<dbReference type="OrthoDB" id="9804478at2"/>
<dbReference type="BioCyc" id="MPNE272634:G1GJ3-885-MONOMER"/>
<dbReference type="Proteomes" id="UP000000808">
    <property type="component" value="Chromosome"/>
</dbReference>
<dbReference type="GO" id="GO:0005737">
    <property type="term" value="C:cytoplasm"/>
    <property type="evidence" value="ECO:0007669"/>
    <property type="project" value="UniProtKB-SubCell"/>
</dbReference>
<dbReference type="GO" id="GO:0048476">
    <property type="term" value="C:Holliday junction resolvase complex"/>
    <property type="evidence" value="ECO:0007669"/>
    <property type="project" value="UniProtKB-UniRule"/>
</dbReference>
<dbReference type="GO" id="GO:0005524">
    <property type="term" value="F:ATP binding"/>
    <property type="evidence" value="ECO:0007669"/>
    <property type="project" value="UniProtKB-UniRule"/>
</dbReference>
<dbReference type="GO" id="GO:0016887">
    <property type="term" value="F:ATP hydrolysis activity"/>
    <property type="evidence" value="ECO:0007669"/>
    <property type="project" value="InterPro"/>
</dbReference>
<dbReference type="GO" id="GO:0000400">
    <property type="term" value="F:four-way junction DNA binding"/>
    <property type="evidence" value="ECO:0007669"/>
    <property type="project" value="UniProtKB-UniRule"/>
</dbReference>
<dbReference type="GO" id="GO:0009378">
    <property type="term" value="F:four-way junction helicase activity"/>
    <property type="evidence" value="ECO:0007669"/>
    <property type="project" value="InterPro"/>
</dbReference>
<dbReference type="GO" id="GO:0006310">
    <property type="term" value="P:DNA recombination"/>
    <property type="evidence" value="ECO:0007669"/>
    <property type="project" value="UniProtKB-UniRule"/>
</dbReference>
<dbReference type="GO" id="GO:0006281">
    <property type="term" value="P:DNA repair"/>
    <property type="evidence" value="ECO:0007669"/>
    <property type="project" value="UniProtKB-UniRule"/>
</dbReference>
<dbReference type="CDD" id="cd00009">
    <property type="entry name" value="AAA"/>
    <property type="match status" value="1"/>
</dbReference>
<dbReference type="Gene3D" id="3.40.50.300">
    <property type="entry name" value="P-loop containing nucleotide triphosphate hydrolases"/>
    <property type="match status" value="1"/>
</dbReference>
<dbReference type="Gene3D" id="1.10.10.10">
    <property type="entry name" value="Winged helix-like DNA-binding domain superfamily/Winged helix DNA-binding domain"/>
    <property type="match status" value="1"/>
</dbReference>
<dbReference type="HAMAP" id="MF_00016">
    <property type="entry name" value="DNA_HJ_migration_RuvB"/>
    <property type="match status" value="1"/>
</dbReference>
<dbReference type="InterPro" id="IPR003593">
    <property type="entry name" value="AAA+_ATPase"/>
</dbReference>
<dbReference type="InterPro" id="IPR041445">
    <property type="entry name" value="AAA_lid_4"/>
</dbReference>
<dbReference type="InterPro" id="IPR004605">
    <property type="entry name" value="DNA_helicase_Holl-junc_RuvB"/>
</dbReference>
<dbReference type="InterPro" id="IPR027417">
    <property type="entry name" value="P-loop_NTPase"/>
</dbReference>
<dbReference type="InterPro" id="IPR008824">
    <property type="entry name" value="RuvB-like_N"/>
</dbReference>
<dbReference type="InterPro" id="IPR008823">
    <property type="entry name" value="RuvB_C"/>
</dbReference>
<dbReference type="InterPro" id="IPR036388">
    <property type="entry name" value="WH-like_DNA-bd_sf"/>
</dbReference>
<dbReference type="InterPro" id="IPR036390">
    <property type="entry name" value="WH_DNA-bd_sf"/>
</dbReference>
<dbReference type="NCBIfam" id="NF000868">
    <property type="entry name" value="PRK00080.1"/>
    <property type="match status" value="1"/>
</dbReference>
<dbReference type="NCBIfam" id="TIGR00635">
    <property type="entry name" value="ruvB"/>
    <property type="match status" value="1"/>
</dbReference>
<dbReference type="PANTHER" id="PTHR42848">
    <property type="match status" value="1"/>
</dbReference>
<dbReference type="PANTHER" id="PTHR42848:SF1">
    <property type="entry name" value="HOLLIDAY JUNCTION BRANCH MIGRATION COMPLEX SUBUNIT RUVB"/>
    <property type="match status" value="1"/>
</dbReference>
<dbReference type="Pfam" id="PF17864">
    <property type="entry name" value="AAA_lid_4"/>
    <property type="match status" value="1"/>
</dbReference>
<dbReference type="Pfam" id="PF05491">
    <property type="entry name" value="RuvB_C"/>
    <property type="match status" value="1"/>
</dbReference>
<dbReference type="Pfam" id="PF05496">
    <property type="entry name" value="RuvB_N"/>
    <property type="match status" value="1"/>
</dbReference>
<dbReference type="SMART" id="SM00382">
    <property type="entry name" value="AAA"/>
    <property type="match status" value="1"/>
</dbReference>
<dbReference type="SUPFAM" id="SSF52540">
    <property type="entry name" value="P-loop containing nucleoside triphosphate hydrolases"/>
    <property type="match status" value="1"/>
</dbReference>
<dbReference type="SUPFAM" id="SSF46785">
    <property type="entry name" value="Winged helix' DNA-binding domain"/>
    <property type="match status" value="1"/>
</dbReference>
<accession>P75242</accession>
<sequence>MKLQIKPPNNFAEFVGKQEIINQIQLSIKASRINKAQLDHILLYGPPGVGKTTLARLIASEMNTKLQIIQGGHLQRPSDFLNAVSLIKKGDVLFVDEIHAVAPSVMELMFPVMDDFRVQVLIGKDFNSKMVEMKVNPFTWIGATTQFGKIINPLEDRFGMILNIDYYSNQEIERIVSIYGEQMELELKPEEITQITQHSKQTPRIAIRIVKRLFEQKIVNKKIDLAALFKSLMIYKNGLQSIDVQYLKALNGQYEPQGIKSICSMLGIDKSTVENKIEPFLLRENMIQKTKKGRIITRTGRNYLTSC</sequence>
<organism>
    <name type="scientific">Mycoplasma pneumoniae (strain ATCC 29342 / M129 / Subtype 1)</name>
    <name type="common">Mycoplasmoides pneumoniae</name>
    <dbReference type="NCBI Taxonomy" id="272634"/>
    <lineage>
        <taxon>Bacteria</taxon>
        <taxon>Bacillati</taxon>
        <taxon>Mycoplasmatota</taxon>
        <taxon>Mycoplasmoidales</taxon>
        <taxon>Mycoplasmoidaceae</taxon>
        <taxon>Mycoplasmoides</taxon>
    </lineage>
</organism>
<protein>
    <recommendedName>
        <fullName evidence="1">Holliday junction branch migration complex subunit RuvB</fullName>
        <ecNumber evidence="1">3.6.4.-</ecNumber>
    </recommendedName>
</protein>